<reference key="1">
    <citation type="journal article" date="2005" name="J. Bacteriol.">
        <title>Insights into genome plasticity and pathogenicity of the plant pathogenic Bacterium Xanthomonas campestris pv. vesicatoria revealed by the complete genome sequence.</title>
        <authorList>
            <person name="Thieme F."/>
            <person name="Koebnik R."/>
            <person name="Bekel T."/>
            <person name="Berger C."/>
            <person name="Boch J."/>
            <person name="Buettner D."/>
            <person name="Caldana C."/>
            <person name="Gaigalat L."/>
            <person name="Goesmann A."/>
            <person name="Kay S."/>
            <person name="Kirchner O."/>
            <person name="Lanz C."/>
            <person name="Linke B."/>
            <person name="McHardy A.C."/>
            <person name="Meyer F."/>
            <person name="Mittenhuber G."/>
            <person name="Nies D.H."/>
            <person name="Niesbach-Kloesgen U."/>
            <person name="Patschkowski T."/>
            <person name="Rueckert C."/>
            <person name="Rupp O."/>
            <person name="Schneiker S."/>
            <person name="Schuster S.C."/>
            <person name="Vorhoelter F.J."/>
            <person name="Weber E."/>
            <person name="Puehler A."/>
            <person name="Bonas U."/>
            <person name="Bartels D."/>
            <person name="Kaiser O."/>
        </authorList>
    </citation>
    <scope>NUCLEOTIDE SEQUENCE [LARGE SCALE GENOMIC DNA]</scope>
    <source>
        <strain>85-10</strain>
    </source>
</reference>
<protein>
    <recommendedName>
        <fullName evidence="1">Ribonuclease PH</fullName>
        <shortName evidence="1">RNase PH</shortName>
        <ecNumber evidence="1">2.7.7.56</ecNumber>
    </recommendedName>
    <alternativeName>
        <fullName evidence="1">tRNA nucleotidyltransferase</fullName>
    </alternativeName>
</protein>
<comment type="function">
    <text evidence="1">Phosphorolytic 3'-5' exoribonuclease that plays an important role in tRNA 3'-end maturation. Removes nucleotide residues following the 3'-CCA terminus of tRNAs; can also add nucleotides to the ends of RNA molecules by using nucleoside diphosphates as substrates, but this may not be physiologically important. Probably plays a role in initiation of 16S rRNA degradation (leading to ribosome degradation) during starvation.</text>
</comment>
<comment type="catalytic activity">
    <reaction evidence="1">
        <text>tRNA(n+1) + phosphate = tRNA(n) + a ribonucleoside 5'-diphosphate</text>
        <dbReference type="Rhea" id="RHEA:10628"/>
        <dbReference type="Rhea" id="RHEA-COMP:17343"/>
        <dbReference type="Rhea" id="RHEA-COMP:17344"/>
        <dbReference type="ChEBI" id="CHEBI:43474"/>
        <dbReference type="ChEBI" id="CHEBI:57930"/>
        <dbReference type="ChEBI" id="CHEBI:173114"/>
        <dbReference type="EC" id="2.7.7.56"/>
    </reaction>
</comment>
<comment type="subunit">
    <text evidence="1">Homohexameric ring arranged as a trimer of dimers.</text>
</comment>
<comment type="similarity">
    <text evidence="1">Belongs to the RNase PH family.</text>
</comment>
<keyword id="KW-0548">Nucleotidyltransferase</keyword>
<keyword id="KW-0694">RNA-binding</keyword>
<keyword id="KW-0698">rRNA processing</keyword>
<keyword id="KW-0808">Transferase</keyword>
<keyword id="KW-0819">tRNA processing</keyword>
<keyword id="KW-0820">tRNA-binding</keyword>
<dbReference type="EC" id="2.7.7.56" evidence="1"/>
<dbReference type="EMBL" id="AM039952">
    <property type="protein sequence ID" value="CAJ25245.1"/>
    <property type="molecule type" value="Genomic_DNA"/>
</dbReference>
<dbReference type="RefSeq" id="WP_008575825.1">
    <property type="nucleotide sequence ID" value="NZ_CP017190.1"/>
</dbReference>
<dbReference type="SMR" id="Q3BPR8"/>
<dbReference type="STRING" id="456327.BJD11_05170"/>
<dbReference type="GeneID" id="93992508"/>
<dbReference type="KEGG" id="xcv:XCV3514"/>
<dbReference type="eggNOG" id="COG0689">
    <property type="taxonomic scope" value="Bacteria"/>
</dbReference>
<dbReference type="HOGENOM" id="CLU_050858_0_0_6"/>
<dbReference type="Proteomes" id="UP000007069">
    <property type="component" value="Chromosome"/>
</dbReference>
<dbReference type="GO" id="GO:0000175">
    <property type="term" value="F:3'-5'-RNA exonuclease activity"/>
    <property type="evidence" value="ECO:0007669"/>
    <property type="project" value="UniProtKB-UniRule"/>
</dbReference>
<dbReference type="GO" id="GO:0000049">
    <property type="term" value="F:tRNA binding"/>
    <property type="evidence" value="ECO:0007669"/>
    <property type="project" value="UniProtKB-UniRule"/>
</dbReference>
<dbReference type="GO" id="GO:0009022">
    <property type="term" value="F:tRNA nucleotidyltransferase activity"/>
    <property type="evidence" value="ECO:0007669"/>
    <property type="project" value="UniProtKB-UniRule"/>
</dbReference>
<dbReference type="GO" id="GO:0016075">
    <property type="term" value="P:rRNA catabolic process"/>
    <property type="evidence" value="ECO:0007669"/>
    <property type="project" value="UniProtKB-UniRule"/>
</dbReference>
<dbReference type="GO" id="GO:0006364">
    <property type="term" value="P:rRNA processing"/>
    <property type="evidence" value="ECO:0007669"/>
    <property type="project" value="UniProtKB-KW"/>
</dbReference>
<dbReference type="GO" id="GO:0008033">
    <property type="term" value="P:tRNA processing"/>
    <property type="evidence" value="ECO:0007669"/>
    <property type="project" value="UniProtKB-UniRule"/>
</dbReference>
<dbReference type="CDD" id="cd11362">
    <property type="entry name" value="RNase_PH_bact"/>
    <property type="match status" value="1"/>
</dbReference>
<dbReference type="FunFam" id="3.30.230.70:FF:000003">
    <property type="entry name" value="Ribonuclease PH"/>
    <property type="match status" value="1"/>
</dbReference>
<dbReference type="Gene3D" id="3.30.230.70">
    <property type="entry name" value="GHMP Kinase, N-terminal domain"/>
    <property type="match status" value="1"/>
</dbReference>
<dbReference type="HAMAP" id="MF_00564">
    <property type="entry name" value="RNase_PH"/>
    <property type="match status" value="1"/>
</dbReference>
<dbReference type="InterPro" id="IPR001247">
    <property type="entry name" value="ExoRNase_PH_dom1"/>
</dbReference>
<dbReference type="InterPro" id="IPR015847">
    <property type="entry name" value="ExoRNase_PH_dom2"/>
</dbReference>
<dbReference type="InterPro" id="IPR036345">
    <property type="entry name" value="ExoRNase_PH_dom2_sf"/>
</dbReference>
<dbReference type="InterPro" id="IPR027408">
    <property type="entry name" value="PNPase/RNase_PH_dom_sf"/>
</dbReference>
<dbReference type="InterPro" id="IPR020568">
    <property type="entry name" value="Ribosomal_Su5_D2-typ_SF"/>
</dbReference>
<dbReference type="InterPro" id="IPR050080">
    <property type="entry name" value="RNase_PH"/>
</dbReference>
<dbReference type="InterPro" id="IPR002381">
    <property type="entry name" value="RNase_PH_bac-type"/>
</dbReference>
<dbReference type="InterPro" id="IPR018336">
    <property type="entry name" value="RNase_PH_CS"/>
</dbReference>
<dbReference type="NCBIfam" id="TIGR01966">
    <property type="entry name" value="RNasePH"/>
    <property type="match status" value="1"/>
</dbReference>
<dbReference type="PANTHER" id="PTHR11953">
    <property type="entry name" value="EXOSOME COMPLEX COMPONENT"/>
    <property type="match status" value="1"/>
</dbReference>
<dbReference type="PANTHER" id="PTHR11953:SF0">
    <property type="entry name" value="EXOSOME COMPLEX COMPONENT RRP41"/>
    <property type="match status" value="1"/>
</dbReference>
<dbReference type="Pfam" id="PF01138">
    <property type="entry name" value="RNase_PH"/>
    <property type="match status" value="1"/>
</dbReference>
<dbReference type="Pfam" id="PF03725">
    <property type="entry name" value="RNase_PH_C"/>
    <property type="match status" value="1"/>
</dbReference>
<dbReference type="SUPFAM" id="SSF55666">
    <property type="entry name" value="Ribonuclease PH domain 2-like"/>
    <property type="match status" value="1"/>
</dbReference>
<dbReference type="SUPFAM" id="SSF54211">
    <property type="entry name" value="Ribosomal protein S5 domain 2-like"/>
    <property type="match status" value="1"/>
</dbReference>
<dbReference type="PROSITE" id="PS01277">
    <property type="entry name" value="RIBONUCLEASE_PH"/>
    <property type="match status" value="1"/>
</dbReference>
<feature type="chain" id="PRO_1000024904" description="Ribonuclease PH">
    <location>
        <begin position="1"/>
        <end position="241"/>
    </location>
</feature>
<feature type="binding site" evidence="1">
    <location>
        <position position="89"/>
    </location>
    <ligand>
        <name>phosphate</name>
        <dbReference type="ChEBI" id="CHEBI:43474"/>
        <note>substrate</note>
    </ligand>
</feature>
<feature type="binding site" evidence="1">
    <location>
        <begin position="127"/>
        <end position="129"/>
    </location>
    <ligand>
        <name>phosphate</name>
        <dbReference type="ChEBI" id="CHEBI:43474"/>
        <note>substrate</note>
    </ligand>
</feature>
<proteinExistence type="inferred from homology"/>
<organism>
    <name type="scientific">Xanthomonas euvesicatoria pv. vesicatoria (strain 85-10)</name>
    <name type="common">Xanthomonas campestris pv. vesicatoria</name>
    <dbReference type="NCBI Taxonomy" id="316273"/>
    <lineage>
        <taxon>Bacteria</taxon>
        <taxon>Pseudomonadati</taxon>
        <taxon>Pseudomonadota</taxon>
        <taxon>Gammaproteobacteria</taxon>
        <taxon>Lysobacterales</taxon>
        <taxon>Lysobacteraceae</taxon>
        <taxon>Xanthomonas</taxon>
    </lineage>
</organism>
<name>RNPH_XANE5</name>
<sequence>MTFSRPSGRTADQLRPVRIERAFTRHAEGSVLVSFGDTRVLCTASVENRVPGFLRGKGEGWVTAEYGMLPRSTHTRSDREAARGKQGGRTLEIQRLIGRALRACVDRNALGERTITLDCDVLQADGGTRTAAITGAYVALADAVNLLIKRGDIKKHPLIGAVAAVSVGIYRGEPVLDLDYPEDSDCDTDMNVVMNDGGGFIELQGTAEGHAFRRDELNALLALAEKGMGELFALQRAALAG</sequence>
<evidence type="ECO:0000255" key="1">
    <source>
        <dbReference type="HAMAP-Rule" id="MF_00564"/>
    </source>
</evidence>
<gene>
    <name evidence="1" type="primary">rph</name>
    <name type="ordered locus">XCV3514</name>
</gene>
<accession>Q3BPR8</accession>